<reference key="1">
    <citation type="journal article" date="1990" name="Virology">
        <title>The complete DNA sequence of vaccinia virus.</title>
        <authorList>
            <person name="Goebel S.J."/>
            <person name="Johnson G.P."/>
            <person name="Perkus M.E."/>
            <person name="Davis S.W."/>
            <person name="Winslow J.P."/>
            <person name="Paoletti E."/>
        </authorList>
    </citation>
    <scope>NUCLEOTIDE SEQUENCE [LARGE SCALE GENOMIC DNA]</scope>
</reference>
<reference key="2">
    <citation type="journal article" date="1990" name="Virology">
        <title>Appendix to 'The complete DNA sequence of vaccinia virus'.</title>
        <authorList>
            <person name="Goebel S.J."/>
            <person name="Johnson G.P."/>
            <person name="Perkus M.E."/>
            <person name="Davis S.W."/>
            <person name="Winslow J.P."/>
            <person name="Paoletti E."/>
        </authorList>
    </citation>
    <scope>NUCLEOTIDE SEQUENCE [LARGE SCALE GENOMIC DNA]</scope>
</reference>
<dbReference type="EMBL" id="M35027">
    <property type="protein sequence ID" value="AAA48127.1"/>
    <property type="molecule type" value="Genomic_DNA"/>
</dbReference>
<dbReference type="PIR" id="A42518">
    <property type="entry name" value="A42518"/>
</dbReference>
<dbReference type="PDB" id="8P0J">
    <property type="method" value="EM"/>
    <property type="resolution" value="2.39 A"/>
    <property type="chains" value="I=1-288"/>
</dbReference>
<dbReference type="PDB" id="8P0K">
    <property type="method" value="EM"/>
    <property type="resolution" value="2.64 A"/>
    <property type="chains" value="I=1-288"/>
</dbReference>
<dbReference type="PDB" id="8P0N">
    <property type="method" value="EM"/>
    <property type="resolution" value="2.58 A"/>
    <property type="chains" value="I=1-288"/>
</dbReference>
<dbReference type="PDBsum" id="8P0J"/>
<dbReference type="PDBsum" id="8P0K"/>
<dbReference type="PDBsum" id="8P0N"/>
<dbReference type="EMDB" id="EMD-17334"/>
<dbReference type="EMDB" id="EMD-17335"/>
<dbReference type="EMDB" id="EMD-17336"/>
<dbReference type="SMR" id="P20986"/>
<dbReference type="DIP" id="DIP-2184N"/>
<dbReference type="IntAct" id="P20986">
    <property type="interactions" value="1"/>
</dbReference>
<dbReference type="MINT" id="P20986"/>
<dbReference type="Proteomes" id="UP000008269">
    <property type="component" value="Segment"/>
</dbReference>
<dbReference type="InterPro" id="IPR006834">
    <property type="entry name" value="Pox_A8"/>
</dbReference>
<dbReference type="Pfam" id="PF04745">
    <property type="entry name" value="Pox_A8"/>
    <property type="match status" value="1"/>
</dbReference>
<evidence type="ECO:0000250" key="1">
    <source>
        <dbReference type="UniProtKB" id="P68720"/>
    </source>
</evidence>
<evidence type="ECO:0000305" key="2"/>
<name>VTF3S_VACCC</name>
<organism>
    <name type="scientific">Vaccinia virus (strain Copenhagen)</name>
    <name type="common">VACV</name>
    <dbReference type="NCBI Taxonomy" id="10249"/>
    <lineage>
        <taxon>Viruses</taxon>
        <taxon>Varidnaviria</taxon>
        <taxon>Bamfordvirae</taxon>
        <taxon>Nucleocytoviricota</taxon>
        <taxon>Pokkesviricetes</taxon>
        <taxon>Chitovirales</taxon>
        <taxon>Poxviridae</taxon>
        <taxon>Chordopoxvirinae</taxon>
        <taxon>Orthopoxvirus</taxon>
        <taxon>Vaccinia virus</taxon>
    </lineage>
</organism>
<accession>P20986</accession>
<sequence length="288" mass="33576">MFEPVPDLNLEASVELGEVNIDQTTPMIKENSGFISRSRRLFAHRSKDDERKLALRFFLQRLYFLDHREIHYLFRCVDAVKDVTITKKNNIIVAPYIALLTIASKGCKLTETMIEAFFPELYNEHSKKFKFNSQVSIIQEKLGYQFGNYHVYDFEPYYSTVALAIRDEHSSGIFNIRQESYLVSSLSEITYRFYLINLKSDLVQWSASTGAVINQMVNTVLITVYEKLQLVIENDSQFTCSLAVESELPIKLLKDRNELFTKFINELKKTSSFKISKRDKDTLLKYFT</sequence>
<protein>
    <recommendedName>
        <fullName>Intermediate transcription factor 3 small subunit</fullName>
    </recommendedName>
    <alternativeName>
        <fullName>VITF-3 32 kDa subunit</fullName>
    </alternativeName>
    <alternativeName>
        <fullName>VITF-3 small subunit</fullName>
    </alternativeName>
</protein>
<organismHost>
    <name type="scientific">Homo sapiens</name>
    <name type="common">Human</name>
    <dbReference type="NCBI Taxonomy" id="9606"/>
</organismHost>
<feature type="chain" id="PRO_0000099191" description="Intermediate transcription factor 3 small subunit">
    <location>
        <begin position="1"/>
        <end position="288"/>
    </location>
</feature>
<gene>
    <name type="primary">OPG134</name>
    <name type="synonym">VITF3S</name>
    <name type="ORF">A8R</name>
</gene>
<keyword id="KW-0002">3D-structure</keyword>
<keyword id="KW-0010">Activator</keyword>
<keyword id="KW-0244">Early protein</keyword>
<keyword id="KW-1185">Reference proteome</keyword>
<keyword id="KW-0804">Transcription</keyword>
<keyword id="KW-0805">Transcription regulation</keyword>
<proteinExistence type="evidence at protein level"/>
<comment type="function">
    <text evidence="1">Acts with RNA polymerase to initiate transcription from intermediate gene promoters.</text>
</comment>
<comment type="subunit">
    <text evidence="1">Heterodimer of a 45 kDa (A23R) and a 32 kDa (A8R) subunit to form the virus intermediate transcription factor (VITF)-3.</text>
</comment>
<comment type="induction">
    <text>Expressed in the early phase of the viral replicative cycle.</text>
</comment>
<comment type="similarity">
    <text evidence="2">Belongs to the orthopoxvirus OPG134 family.</text>
</comment>